<proteinExistence type="inferred from homology"/>
<dbReference type="EMBL" id="EF380352">
    <property type="protein sequence ID" value="ABQ43273.1"/>
    <property type="molecule type" value="Genomic_DNA"/>
</dbReference>
<dbReference type="RefSeq" id="YP_001294111.1">
    <property type="nucleotide sequence ID" value="NC_009598.1"/>
</dbReference>
<dbReference type="SMR" id="A6MMD5"/>
<dbReference type="GeneID" id="5236549"/>
<dbReference type="GO" id="GO:0009535">
    <property type="term" value="C:chloroplast thylakoid membrane"/>
    <property type="evidence" value="ECO:0007669"/>
    <property type="project" value="UniProtKB-SubCell"/>
</dbReference>
<dbReference type="GO" id="GO:0009055">
    <property type="term" value="F:electron transfer activity"/>
    <property type="evidence" value="ECO:0007669"/>
    <property type="project" value="UniProtKB-UniRule"/>
</dbReference>
<dbReference type="GO" id="GO:0020037">
    <property type="term" value="F:heme binding"/>
    <property type="evidence" value="ECO:0007669"/>
    <property type="project" value="InterPro"/>
</dbReference>
<dbReference type="GO" id="GO:0005506">
    <property type="term" value="F:iron ion binding"/>
    <property type="evidence" value="ECO:0007669"/>
    <property type="project" value="InterPro"/>
</dbReference>
<dbReference type="GO" id="GO:0015979">
    <property type="term" value="P:photosynthesis"/>
    <property type="evidence" value="ECO:0007669"/>
    <property type="project" value="UniProtKB-UniRule"/>
</dbReference>
<dbReference type="FunFam" id="1.20.5.700:FF:000001">
    <property type="entry name" value="Cytochrome f"/>
    <property type="match status" value="1"/>
</dbReference>
<dbReference type="FunFam" id="2.40.50.100:FF:000007">
    <property type="entry name" value="Cytochrome f"/>
    <property type="match status" value="1"/>
</dbReference>
<dbReference type="FunFam" id="2.60.40.830:FF:000001">
    <property type="entry name" value="Cytochrome f"/>
    <property type="match status" value="1"/>
</dbReference>
<dbReference type="Gene3D" id="2.40.50.100">
    <property type="match status" value="1"/>
</dbReference>
<dbReference type="Gene3D" id="2.60.40.830">
    <property type="entry name" value="Cytochrome f large domain"/>
    <property type="match status" value="1"/>
</dbReference>
<dbReference type="Gene3D" id="1.20.5.700">
    <property type="entry name" value="Single helix bin"/>
    <property type="match status" value="1"/>
</dbReference>
<dbReference type="HAMAP" id="MF_00610">
    <property type="entry name" value="Cytb6_f_cytF"/>
    <property type="match status" value="1"/>
</dbReference>
<dbReference type="InterPro" id="IPR024058">
    <property type="entry name" value="Cyt-f_TM"/>
</dbReference>
<dbReference type="InterPro" id="IPR002325">
    <property type="entry name" value="Cyt_f"/>
</dbReference>
<dbReference type="InterPro" id="IPR024094">
    <property type="entry name" value="Cyt_f_lg_dom"/>
</dbReference>
<dbReference type="InterPro" id="IPR036826">
    <property type="entry name" value="Cyt_f_lg_dom_sf"/>
</dbReference>
<dbReference type="InterPro" id="IPR011054">
    <property type="entry name" value="Rudment_hybrid_motif"/>
</dbReference>
<dbReference type="PANTHER" id="PTHR33288">
    <property type="match status" value="1"/>
</dbReference>
<dbReference type="PANTHER" id="PTHR33288:SF10">
    <property type="entry name" value="CYTOCHROME F"/>
    <property type="match status" value="1"/>
</dbReference>
<dbReference type="Pfam" id="PF01333">
    <property type="entry name" value="Apocytochr_F_C"/>
    <property type="match status" value="1"/>
</dbReference>
<dbReference type="Pfam" id="PF16639">
    <property type="entry name" value="Apocytochr_F_N"/>
    <property type="match status" value="1"/>
</dbReference>
<dbReference type="PRINTS" id="PR00610">
    <property type="entry name" value="CYTOCHROMEF"/>
</dbReference>
<dbReference type="SUPFAM" id="SSF103431">
    <property type="entry name" value="Cytochrome f subunit of the cytochrome b6f complex, transmembrane anchor"/>
    <property type="match status" value="1"/>
</dbReference>
<dbReference type="SUPFAM" id="SSF49441">
    <property type="entry name" value="Cytochrome f, large domain"/>
    <property type="match status" value="1"/>
</dbReference>
<dbReference type="SUPFAM" id="SSF51246">
    <property type="entry name" value="Rudiment single hybrid motif"/>
    <property type="match status" value="1"/>
</dbReference>
<dbReference type="PROSITE" id="PS51010">
    <property type="entry name" value="CYTF"/>
    <property type="match status" value="1"/>
</dbReference>
<geneLocation type="chloroplast"/>
<reference key="1">
    <citation type="journal article" date="2007" name="Mol. Phylogenet. Evol.">
        <title>Phylogenetic and evolutionary implications of complete chloroplast genome sequences of four early-diverging angiosperms: Buxus (Buxaceae), Chloranthus (Chloranthaceae), Dioscorea (Dioscoreaceae), and Illicium (Schisandraceae).</title>
        <authorList>
            <person name="Hansen D.R."/>
            <person name="Dastidar S.G."/>
            <person name="Cai Z."/>
            <person name="Penaflor C."/>
            <person name="Kuehl J.V."/>
            <person name="Boore J.L."/>
            <person name="Jansen R.K."/>
        </authorList>
    </citation>
    <scope>NUCLEOTIDE SEQUENCE [LARGE SCALE GENOMIC DNA]</scope>
</reference>
<accession>A6MMD5</accession>
<comment type="function">
    <text evidence="2">Component of the cytochrome b6-f complex, which mediates electron transfer between photosystem II (PSII) and photosystem I (PSI), cyclic electron flow around PSI, and state transitions.</text>
</comment>
<comment type="cofactor">
    <cofactor evidence="2">
        <name>heme</name>
        <dbReference type="ChEBI" id="CHEBI:30413"/>
    </cofactor>
    <text evidence="2">Binds 1 heme group covalently.</text>
</comment>
<comment type="subunit">
    <text evidence="1">The 4 large subunits of the cytochrome b6-f complex are cytochrome b6, subunit IV (17 kDa polypeptide, petD), cytochrome f and the Rieske protein, while the 4 small subunits are PetG, PetL, PetM and PetN. The complex functions as a dimer (By similarity).</text>
</comment>
<comment type="subcellular location">
    <subcellularLocation>
        <location evidence="2">Plastid</location>
        <location evidence="2">Chloroplast thylakoid membrane</location>
        <topology evidence="2">Single-pass membrane protein</topology>
    </subcellularLocation>
</comment>
<comment type="similarity">
    <text evidence="2">Belongs to the cytochrome f family.</text>
</comment>
<protein>
    <recommendedName>
        <fullName evidence="2">Cytochrome f</fullName>
    </recommendedName>
</protein>
<organism>
    <name type="scientific">Chloranthus spicatus</name>
    <name type="common">Chulantree</name>
    <name type="synonym">Nigrina spicata</name>
    <dbReference type="NCBI Taxonomy" id="13006"/>
    <lineage>
        <taxon>Eukaryota</taxon>
        <taxon>Viridiplantae</taxon>
        <taxon>Streptophyta</taxon>
        <taxon>Embryophyta</taxon>
        <taxon>Tracheophyta</taxon>
        <taxon>Spermatophyta</taxon>
        <taxon>Magnoliopsida</taxon>
        <taxon>Chloranthales</taxon>
        <taxon>Chloranthaceae</taxon>
        <taxon>Chloranthus</taxon>
    </lineage>
</organism>
<sequence length="320" mass="35256">MQNRNTFSWVKEQMTRSISVSIIIYVITRTSISNAYPIFAQQGYENPREATGRIVCANCHLANKPVDIEVPQAVLPDTVFEAVVKIPYDMQLKQVLANGKKGALNVGALLILPEGFELAPPDRISPEMKEKMGNLSFQSYRPTKRNILVIGPVPGQKYSEIVFPILSPDPATKKDVHFLKYPIYVGGNRGRGQIYPDGSKSNNTVYNARTAGIVSRIVRKEKGGYEITIADASDGHQVVDIIPSGPELLVSEGESIKLDQPLTSNPNVGGFGQGGAEIVLQDPLRVQGLLFFLASIILAQIFLVLKKKQFEKVQLSEMNF</sequence>
<gene>
    <name evidence="2" type="primary">petA</name>
</gene>
<feature type="signal peptide" evidence="2">
    <location>
        <begin position="1"/>
        <end position="35"/>
    </location>
</feature>
<feature type="chain" id="PRO_0000342053" description="Cytochrome f">
    <location>
        <begin position="36"/>
        <end position="320"/>
    </location>
</feature>
<feature type="transmembrane region" description="Helical" evidence="2">
    <location>
        <begin position="286"/>
        <end position="306"/>
    </location>
</feature>
<feature type="binding site" description="axial binding residue" evidence="2">
    <location>
        <position position="36"/>
    </location>
    <ligand>
        <name>heme</name>
        <dbReference type="ChEBI" id="CHEBI:30413"/>
    </ligand>
    <ligandPart>
        <name>Fe</name>
        <dbReference type="ChEBI" id="CHEBI:18248"/>
    </ligandPart>
</feature>
<feature type="binding site" description="covalent" evidence="2">
    <location>
        <position position="56"/>
    </location>
    <ligand>
        <name>heme</name>
        <dbReference type="ChEBI" id="CHEBI:30413"/>
    </ligand>
</feature>
<feature type="binding site" description="covalent" evidence="2">
    <location>
        <position position="59"/>
    </location>
    <ligand>
        <name>heme</name>
        <dbReference type="ChEBI" id="CHEBI:30413"/>
    </ligand>
</feature>
<feature type="binding site" description="axial binding residue" evidence="2">
    <location>
        <position position="60"/>
    </location>
    <ligand>
        <name>heme</name>
        <dbReference type="ChEBI" id="CHEBI:30413"/>
    </ligand>
    <ligandPart>
        <name>Fe</name>
        <dbReference type="ChEBI" id="CHEBI:18248"/>
    </ligandPart>
</feature>
<keyword id="KW-0150">Chloroplast</keyword>
<keyword id="KW-0249">Electron transport</keyword>
<keyword id="KW-0349">Heme</keyword>
<keyword id="KW-0408">Iron</keyword>
<keyword id="KW-0472">Membrane</keyword>
<keyword id="KW-0479">Metal-binding</keyword>
<keyword id="KW-0602">Photosynthesis</keyword>
<keyword id="KW-0934">Plastid</keyword>
<keyword id="KW-0732">Signal</keyword>
<keyword id="KW-0793">Thylakoid</keyword>
<keyword id="KW-0812">Transmembrane</keyword>
<keyword id="KW-1133">Transmembrane helix</keyword>
<keyword id="KW-0813">Transport</keyword>
<evidence type="ECO:0000250" key="1"/>
<evidence type="ECO:0000255" key="2">
    <source>
        <dbReference type="HAMAP-Rule" id="MF_00610"/>
    </source>
</evidence>
<name>CYF_CHLSC</name>